<protein>
    <recommendedName>
        <fullName>Cadherin EGF LAG seven-pass G-type receptor 2</fullName>
    </recommendedName>
    <alternativeName>
        <fullName>Flamingo homolog</fullName>
    </alternativeName>
</protein>
<dbReference type="EMBL" id="AB028499">
    <property type="protein sequence ID" value="BAA84070.1"/>
    <property type="molecule type" value="mRNA"/>
</dbReference>
<dbReference type="EMBL" id="AF031573">
    <property type="protein sequence ID" value="AAC68837.1"/>
    <property type="molecule type" value="mRNA"/>
</dbReference>
<dbReference type="EMBL" id="AL671899">
    <property type="status" value="NOT_ANNOTATED_CDS"/>
    <property type="molecule type" value="Genomic_DNA"/>
</dbReference>
<dbReference type="EMBL" id="AL672200">
    <property type="status" value="NOT_ANNOTATED_CDS"/>
    <property type="molecule type" value="Genomic_DNA"/>
</dbReference>
<dbReference type="EMBL" id="CH466607">
    <property type="protein sequence ID" value="EDL01967.1"/>
    <property type="molecule type" value="Genomic_DNA"/>
</dbReference>
<dbReference type="EMBL" id="BC005499">
    <property type="protein sequence ID" value="AAH05499.1"/>
    <property type="molecule type" value="mRNA"/>
</dbReference>
<dbReference type="CCDS" id="CCDS17759.1">
    <molecule id="Q9R0M0-1"/>
</dbReference>
<dbReference type="RefSeq" id="NP_059088.2">
    <molecule id="Q9R0M0-1"/>
    <property type="nucleotide sequence ID" value="NM_017392.4"/>
</dbReference>
<dbReference type="SMR" id="Q9R0M0"/>
<dbReference type="FunCoup" id="Q9R0M0">
    <property type="interactions" value="1159"/>
</dbReference>
<dbReference type="IntAct" id="Q9R0M0">
    <property type="interactions" value="3"/>
</dbReference>
<dbReference type="MINT" id="Q9R0M0"/>
<dbReference type="STRING" id="10090.ENSMUSP00000088046"/>
<dbReference type="MEROPS" id="P02.006"/>
<dbReference type="MEROPS" id="P02.953"/>
<dbReference type="GlyConnect" id="2174">
    <property type="glycosylation" value="4 N-Linked glycans (5 sites)"/>
</dbReference>
<dbReference type="GlyCosmos" id="Q9R0M0">
    <property type="glycosylation" value="17 sites, 4 glycans"/>
</dbReference>
<dbReference type="GlyGen" id="Q9R0M0">
    <property type="glycosylation" value="19 sites, 10 N-linked glycans (11 sites), 1 O-linked glycan (1 site)"/>
</dbReference>
<dbReference type="iPTMnet" id="Q9R0M0"/>
<dbReference type="PhosphoSitePlus" id="Q9R0M0"/>
<dbReference type="PaxDb" id="10090-ENSMUSP00000088046"/>
<dbReference type="ProteomicsDB" id="281578">
    <molecule id="Q9R0M0-1"/>
</dbReference>
<dbReference type="ProteomicsDB" id="281579">
    <molecule id="Q9R0M0-2"/>
</dbReference>
<dbReference type="ProteomicsDB" id="336635"/>
<dbReference type="Antibodypedia" id="2940">
    <property type="antibodies" value="217 antibodies from 30 providers"/>
</dbReference>
<dbReference type="DNASU" id="53883"/>
<dbReference type="Ensembl" id="ENSMUST00000090558.11">
    <molecule id="Q9R0M0-1"/>
    <property type="protein sequence ID" value="ENSMUSP00000088046.4"/>
    <property type="gene ID" value="ENSMUSG00000068740.15"/>
</dbReference>
<dbReference type="GeneID" id="53883"/>
<dbReference type="KEGG" id="mmu:53883"/>
<dbReference type="UCSC" id="uc008qyx.1">
    <property type="organism name" value="mouse"/>
</dbReference>
<dbReference type="AGR" id="MGI:1858235"/>
<dbReference type="CTD" id="1952"/>
<dbReference type="MGI" id="MGI:1858235">
    <property type="gene designation" value="Celsr2"/>
</dbReference>
<dbReference type="VEuPathDB" id="HostDB:ENSMUSG00000068740"/>
<dbReference type="eggNOG" id="KOG4289">
    <property type="taxonomic scope" value="Eukaryota"/>
</dbReference>
<dbReference type="GeneTree" id="ENSGT00940000157493"/>
<dbReference type="HOGENOM" id="CLU_000158_1_0_1"/>
<dbReference type="InParanoid" id="Q9R0M0"/>
<dbReference type="OMA" id="FTLYIVE"/>
<dbReference type="OrthoDB" id="26203at2759"/>
<dbReference type="PhylomeDB" id="Q9R0M0"/>
<dbReference type="TreeFam" id="TF320624"/>
<dbReference type="BioGRID-ORCS" id="53883">
    <property type="hits" value="4 hits in 77 CRISPR screens"/>
</dbReference>
<dbReference type="ChiTaRS" id="Celsr2">
    <property type="organism name" value="mouse"/>
</dbReference>
<dbReference type="PRO" id="PR:Q9R0M0"/>
<dbReference type="Proteomes" id="UP000000589">
    <property type="component" value="Chromosome 3"/>
</dbReference>
<dbReference type="RNAct" id="Q9R0M0">
    <property type="molecule type" value="protein"/>
</dbReference>
<dbReference type="Bgee" id="ENSMUSG00000068740">
    <property type="expression patterns" value="Expressed in skin of snout and 258 other cell types or tissues"/>
</dbReference>
<dbReference type="ExpressionAtlas" id="Q9R0M0">
    <property type="expression patterns" value="baseline and differential"/>
</dbReference>
<dbReference type="GO" id="GO:0005737">
    <property type="term" value="C:cytoplasm"/>
    <property type="evidence" value="ECO:0000314"/>
    <property type="project" value="BHF-UCL"/>
</dbReference>
<dbReference type="GO" id="GO:0005886">
    <property type="term" value="C:plasma membrane"/>
    <property type="evidence" value="ECO:0000314"/>
    <property type="project" value="BHF-UCL"/>
</dbReference>
<dbReference type="GO" id="GO:0005509">
    <property type="term" value="F:calcium ion binding"/>
    <property type="evidence" value="ECO:0007669"/>
    <property type="project" value="InterPro"/>
</dbReference>
<dbReference type="GO" id="GO:0004930">
    <property type="term" value="F:G protein-coupled receptor activity"/>
    <property type="evidence" value="ECO:0007669"/>
    <property type="project" value="UniProtKB-KW"/>
</dbReference>
<dbReference type="GO" id="GO:0033326">
    <property type="term" value="P:cerebrospinal fluid secretion"/>
    <property type="evidence" value="ECO:0000316"/>
    <property type="project" value="MGI"/>
</dbReference>
<dbReference type="GO" id="GO:0060271">
    <property type="term" value="P:cilium assembly"/>
    <property type="evidence" value="ECO:0000315"/>
    <property type="project" value="MGI"/>
</dbReference>
<dbReference type="GO" id="GO:0003341">
    <property type="term" value="P:cilium movement"/>
    <property type="evidence" value="ECO:0000315"/>
    <property type="project" value="MGI"/>
</dbReference>
<dbReference type="GO" id="GO:0007156">
    <property type="term" value="P:homophilic cell adhesion via plasma membrane adhesion molecules"/>
    <property type="evidence" value="ECO:0000314"/>
    <property type="project" value="BHF-UCL"/>
</dbReference>
<dbReference type="GO" id="GO:0097475">
    <property type="term" value="P:motor neuron migration"/>
    <property type="evidence" value="ECO:0000315"/>
    <property type="project" value="MGI"/>
</dbReference>
<dbReference type="GO" id="GO:0021999">
    <property type="term" value="P:neural plate anterior/posterior regionalization"/>
    <property type="evidence" value="ECO:0000314"/>
    <property type="project" value="BHF-UCL"/>
</dbReference>
<dbReference type="GO" id="GO:0006355">
    <property type="term" value="P:regulation of DNA-templated transcription"/>
    <property type="evidence" value="ECO:0000314"/>
    <property type="project" value="BHF-UCL"/>
</dbReference>
<dbReference type="GO" id="GO:0032880">
    <property type="term" value="P:regulation of protein localization"/>
    <property type="evidence" value="ECO:0000315"/>
    <property type="project" value="MGI"/>
</dbReference>
<dbReference type="GO" id="GO:0021591">
    <property type="term" value="P:ventricular system development"/>
    <property type="evidence" value="ECO:0000315"/>
    <property type="project" value="MGI"/>
</dbReference>
<dbReference type="GO" id="GO:0016055">
    <property type="term" value="P:Wnt signaling pathway"/>
    <property type="evidence" value="ECO:0000314"/>
    <property type="project" value="BHF-UCL"/>
</dbReference>
<dbReference type="CDD" id="cd11304">
    <property type="entry name" value="Cadherin_repeat"/>
    <property type="match status" value="9"/>
</dbReference>
<dbReference type="CDD" id="cd00054">
    <property type="entry name" value="EGF_CA"/>
    <property type="match status" value="4"/>
</dbReference>
<dbReference type="CDD" id="cd00055">
    <property type="entry name" value="EGF_Lam"/>
    <property type="match status" value="1"/>
</dbReference>
<dbReference type="CDD" id="cd00110">
    <property type="entry name" value="LamG"/>
    <property type="match status" value="2"/>
</dbReference>
<dbReference type="FunFam" id="2.10.25.10:FF:000011">
    <property type="entry name" value="Cadherin EGF LAG seven-pass G-type receptor"/>
    <property type="match status" value="1"/>
</dbReference>
<dbReference type="FunFam" id="2.60.40.60:FF:000013">
    <property type="entry name" value="Cadherin EGF LAG seven-pass G-type receptor"/>
    <property type="match status" value="1"/>
</dbReference>
<dbReference type="FunFam" id="1.20.1070.10:FF:000112">
    <property type="entry name" value="Cadherin EGF LAG seven-pass G-type receptor 2"/>
    <property type="match status" value="1"/>
</dbReference>
<dbReference type="FunFam" id="2.60.120.200:FF:000020">
    <property type="entry name" value="Cadherin EGF LAG seven-pass G-type receptor 2"/>
    <property type="match status" value="1"/>
</dbReference>
<dbReference type="FunFam" id="2.60.120.200:FF:000062">
    <property type="entry name" value="Cadherin EGF LAG seven-pass G-type receptor 2"/>
    <property type="match status" value="1"/>
</dbReference>
<dbReference type="FunFam" id="2.60.220.50:FF:000005">
    <property type="entry name" value="Cadherin EGF LAG seven-pass G-type receptor 2"/>
    <property type="match status" value="1"/>
</dbReference>
<dbReference type="FunFam" id="1.25.40.610:FF:000005">
    <property type="entry name" value="cadherin EGF LAG seven-pass G-type receptor 2"/>
    <property type="match status" value="1"/>
</dbReference>
<dbReference type="FunFam" id="2.10.25.10:FF:000156">
    <property type="entry name" value="cadherin EGF LAG seven-pass G-type receptor 2"/>
    <property type="match status" value="1"/>
</dbReference>
<dbReference type="FunFam" id="2.10.25.10:FF:000089">
    <property type="entry name" value="Cadherin EGF LAG seven-pass G-type receptor 3"/>
    <property type="match status" value="1"/>
</dbReference>
<dbReference type="FunFam" id="2.60.40.60:FF:000010">
    <property type="entry name" value="Cadherin EGF LAG seven-pass G-type receptor 3"/>
    <property type="match status" value="2"/>
</dbReference>
<dbReference type="FunFam" id="2.60.40.60:FF:000023">
    <property type="entry name" value="Cadherin EGF LAG seven-pass G-type receptor 3"/>
    <property type="match status" value="2"/>
</dbReference>
<dbReference type="FunFam" id="2.60.40.60:FF:000029">
    <property type="entry name" value="Cadherin EGF LAG seven-pass G-type receptor 3"/>
    <property type="match status" value="1"/>
</dbReference>
<dbReference type="FunFam" id="2.60.40.60:FF:000038">
    <property type="entry name" value="Cadherin EGF LAG seven-pass G-type receptor 3"/>
    <property type="match status" value="1"/>
</dbReference>
<dbReference type="FunFam" id="2.60.40.60:FF:000040">
    <property type="entry name" value="cadherin EGF LAG seven-pass G-type receptor 3"/>
    <property type="match status" value="1"/>
</dbReference>
<dbReference type="FunFam" id="2.10.25.10:FF:000113">
    <property type="entry name" value="Cadherin, EGF LAG seven-pass G-type receptor 3"/>
    <property type="match status" value="1"/>
</dbReference>
<dbReference type="FunFam" id="2.60.40.60:FF:000044">
    <property type="entry name" value="Cadherin, EGF LAG seven-pass G-type receptor 3"/>
    <property type="match status" value="1"/>
</dbReference>
<dbReference type="FunFam" id="4.10.1240.10:FF:000003">
    <property type="entry name" value="Putative cadherin EGF LAG seven-pass G-type receptor 2"/>
    <property type="match status" value="1"/>
</dbReference>
<dbReference type="FunFam" id="2.10.25.10:FF:000864">
    <property type="entry name" value="Y-linked cadherin EGF LAG seven-pass G-type receptor 2"/>
    <property type="match status" value="1"/>
</dbReference>
<dbReference type="Gene3D" id="1.25.40.610">
    <property type="match status" value="1"/>
</dbReference>
<dbReference type="Gene3D" id="2.60.120.200">
    <property type="match status" value="2"/>
</dbReference>
<dbReference type="Gene3D" id="2.60.220.50">
    <property type="match status" value="1"/>
</dbReference>
<dbReference type="Gene3D" id="2.60.40.60">
    <property type="entry name" value="Cadherins"/>
    <property type="match status" value="9"/>
</dbReference>
<dbReference type="Gene3D" id="4.10.1240.10">
    <property type="entry name" value="GPCR, family 2, extracellular hormone receptor domain"/>
    <property type="match status" value="1"/>
</dbReference>
<dbReference type="Gene3D" id="2.10.25.10">
    <property type="entry name" value="Laminin"/>
    <property type="match status" value="7"/>
</dbReference>
<dbReference type="Gene3D" id="1.20.1070.10">
    <property type="entry name" value="Rhodopsin 7-helix transmembrane proteins"/>
    <property type="match status" value="1"/>
</dbReference>
<dbReference type="InterPro" id="IPR002126">
    <property type="entry name" value="Cadherin-like_dom"/>
</dbReference>
<dbReference type="InterPro" id="IPR015919">
    <property type="entry name" value="Cadherin-like_sf"/>
</dbReference>
<dbReference type="InterPro" id="IPR056286">
    <property type="entry name" value="Cadherin_CELSR1-3_9th"/>
</dbReference>
<dbReference type="InterPro" id="IPR020894">
    <property type="entry name" value="Cadherin_CS"/>
</dbReference>
<dbReference type="InterPro" id="IPR013320">
    <property type="entry name" value="ConA-like_dom_sf"/>
</dbReference>
<dbReference type="InterPro" id="IPR001881">
    <property type="entry name" value="EGF-like_Ca-bd_dom"/>
</dbReference>
<dbReference type="InterPro" id="IPR000742">
    <property type="entry name" value="EGF-like_dom"/>
</dbReference>
<dbReference type="InterPro" id="IPR000152">
    <property type="entry name" value="EGF-type_Asp/Asn_hydroxyl_site"/>
</dbReference>
<dbReference type="InterPro" id="IPR057244">
    <property type="entry name" value="GAIN_B"/>
</dbReference>
<dbReference type="InterPro" id="IPR032471">
    <property type="entry name" value="GAIN_dom_N"/>
</dbReference>
<dbReference type="InterPro" id="IPR046338">
    <property type="entry name" value="GAIN_dom_sf"/>
</dbReference>
<dbReference type="InterPro" id="IPR017981">
    <property type="entry name" value="GPCR_2-like_7TM"/>
</dbReference>
<dbReference type="InterPro" id="IPR036445">
    <property type="entry name" value="GPCR_2_extracell_dom_sf"/>
</dbReference>
<dbReference type="InterPro" id="IPR001879">
    <property type="entry name" value="GPCR_2_extracellular_dom"/>
</dbReference>
<dbReference type="InterPro" id="IPR000832">
    <property type="entry name" value="GPCR_2_secretin-like"/>
</dbReference>
<dbReference type="InterPro" id="IPR000203">
    <property type="entry name" value="GPS"/>
</dbReference>
<dbReference type="InterPro" id="IPR001791">
    <property type="entry name" value="Laminin_G"/>
</dbReference>
<dbReference type="InterPro" id="IPR002049">
    <property type="entry name" value="LE_dom"/>
</dbReference>
<dbReference type="PANTHER" id="PTHR24026:SF32">
    <property type="entry name" value="CADHERIN EGF LAG SEVEN-PASS G-TYPE RECEPTOR 2"/>
    <property type="match status" value="1"/>
</dbReference>
<dbReference type="PANTHER" id="PTHR24026">
    <property type="entry name" value="FAT ATYPICAL CADHERIN-RELATED"/>
    <property type="match status" value="1"/>
</dbReference>
<dbReference type="Pfam" id="PF00002">
    <property type="entry name" value="7tm_2"/>
    <property type="match status" value="1"/>
</dbReference>
<dbReference type="Pfam" id="PF00028">
    <property type="entry name" value="Cadherin"/>
    <property type="match status" value="8"/>
</dbReference>
<dbReference type="Pfam" id="PF23592">
    <property type="entry name" value="Cadherin_CELSR2_9th"/>
    <property type="match status" value="1"/>
</dbReference>
<dbReference type="Pfam" id="PF00008">
    <property type="entry name" value="EGF"/>
    <property type="match status" value="2"/>
</dbReference>
<dbReference type="Pfam" id="PF00053">
    <property type="entry name" value="EGF_laminin"/>
    <property type="match status" value="1"/>
</dbReference>
<dbReference type="Pfam" id="PF16489">
    <property type="entry name" value="GAIN"/>
    <property type="match status" value="1"/>
</dbReference>
<dbReference type="Pfam" id="PF01825">
    <property type="entry name" value="GPS"/>
    <property type="match status" value="1"/>
</dbReference>
<dbReference type="Pfam" id="PF02210">
    <property type="entry name" value="Laminin_G_2"/>
    <property type="match status" value="2"/>
</dbReference>
<dbReference type="PRINTS" id="PR00205">
    <property type="entry name" value="CADHERIN"/>
</dbReference>
<dbReference type="PRINTS" id="PR00249">
    <property type="entry name" value="GPCRSECRETIN"/>
</dbReference>
<dbReference type="SMART" id="SM00112">
    <property type="entry name" value="CA"/>
    <property type="match status" value="9"/>
</dbReference>
<dbReference type="SMART" id="SM00181">
    <property type="entry name" value="EGF"/>
    <property type="match status" value="6"/>
</dbReference>
<dbReference type="SMART" id="SM00179">
    <property type="entry name" value="EGF_CA"/>
    <property type="match status" value="5"/>
</dbReference>
<dbReference type="SMART" id="SM00180">
    <property type="entry name" value="EGF_Lam"/>
    <property type="match status" value="1"/>
</dbReference>
<dbReference type="SMART" id="SM00303">
    <property type="entry name" value="GPS"/>
    <property type="match status" value="1"/>
</dbReference>
<dbReference type="SMART" id="SM00008">
    <property type="entry name" value="HormR"/>
    <property type="match status" value="1"/>
</dbReference>
<dbReference type="SMART" id="SM00282">
    <property type="entry name" value="LamG"/>
    <property type="match status" value="2"/>
</dbReference>
<dbReference type="SUPFAM" id="SSF49313">
    <property type="entry name" value="Cadherin-like"/>
    <property type="match status" value="9"/>
</dbReference>
<dbReference type="SUPFAM" id="SSF49899">
    <property type="entry name" value="Concanavalin A-like lectins/glucanases"/>
    <property type="match status" value="2"/>
</dbReference>
<dbReference type="SUPFAM" id="SSF57196">
    <property type="entry name" value="EGF/Laminin"/>
    <property type="match status" value="4"/>
</dbReference>
<dbReference type="PROSITE" id="PS00010">
    <property type="entry name" value="ASX_HYDROXYL"/>
    <property type="match status" value="2"/>
</dbReference>
<dbReference type="PROSITE" id="PS00232">
    <property type="entry name" value="CADHERIN_1"/>
    <property type="match status" value="7"/>
</dbReference>
<dbReference type="PROSITE" id="PS50268">
    <property type="entry name" value="CADHERIN_2"/>
    <property type="match status" value="9"/>
</dbReference>
<dbReference type="PROSITE" id="PS00022">
    <property type="entry name" value="EGF_1"/>
    <property type="match status" value="6"/>
</dbReference>
<dbReference type="PROSITE" id="PS01186">
    <property type="entry name" value="EGF_2"/>
    <property type="match status" value="4"/>
</dbReference>
<dbReference type="PROSITE" id="PS50026">
    <property type="entry name" value="EGF_3"/>
    <property type="match status" value="6"/>
</dbReference>
<dbReference type="PROSITE" id="PS01248">
    <property type="entry name" value="EGF_LAM_1"/>
    <property type="match status" value="1"/>
</dbReference>
<dbReference type="PROSITE" id="PS50027">
    <property type="entry name" value="EGF_LAM_2"/>
    <property type="match status" value="1"/>
</dbReference>
<dbReference type="PROSITE" id="PS50227">
    <property type="entry name" value="G_PROTEIN_RECEP_F2_3"/>
    <property type="match status" value="1"/>
</dbReference>
<dbReference type="PROSITE" id="PS50261">
    <property type="entry name" value="G_PROTEIN_RECEP_F2_4"/>
    <property type="match status" value="1"/>
</dbReference>
<dbReference type="PROSITE" id="PS50221">
    <property type="entry name" value="GAIN_B"/>
    <property type="match status" value="1"/>
</dbReference>
<dbReference type="PROSITE" id="PS50025">
    <property type="entry name" value="LAM_G_DOMAIN"/>
    <property type="match status" value="2"/>
</dbReference>
<organism>
    <name type="scientific">Mus musculus</name>
    <name type="common">Mouse</name>
    <dbReference type="NCBI Taxonomy" id="10090"/>
    <lineage>
        <taxon>Eukaryota</taxon>
        <taxon>Metazoa</taxon>
        <taxon>Chordata</taxon>
        <taxon>Craniata</taxon>
        <taxon>Vertebrata</taxon>
        <taxon>Euteleostomi</taxon>
        <taxon>Mammalia</taxon>
        <taxon>Eutheria</taxon>
        <taxon>Euarchontoglires</taxon>
        <taxon>Glires</taxon>
        <taxon>Rodentia</taxon>
        <taxon>Myomorpha</taxon>
        <taxon>Muroidea</taxon>
        <taxon>Muridae</taxon>
        <taxon>Murinae</taxon>
        <taxon>Mus</taxon>
        <taxon>Mus</taxon>
    </lineage>
</organism>
<comment type="function">
    <text>Receptor that may have an important role in cell/cell signaling during nervous system formation.</text>
</comment>
<comment type="subunit">
    <text evidence="5">Heterodimer of 2 chains generated by proteolytic processing; the large extracellular N-terminal fragment and the membrane-bound C-terminal fragment predominantly remain associated and non-covalently linked.</text>
</comment>
<comment type="interaction">
    <interactant intactId="EBI-8294754">
        <id>Q9R0M0</id>
    </interactant>
    <interactant intactId="EBI-8294706">
        <id>Q7T0S3</id>
        <label>atp6ap2.S</label>
    </interactant>
    <organismsDiffer>true</organismsDiffer>
    <experiments>2</experiments>
</comment>
<comment type="subcellular location">
    <subcellularLocation>
        <location>Cell membrane</location>
        <topology>Multi-pass membrane protein</topology>
    </subcellularLocation>
</comment>
<comment type="alternative products">
    <event type="alternative splicing"/>
    <isoform>
        <id>Q9R0M0-1</id>
        <name>1</name>
        <sequence type="displayed"/>
    </isoform>
    <isoform>
        <id>Q9R0M0-2</id>
        <name>2</name>
        <sequence type="described" ref="VSP_025765"/>
    </isoform>
</comment>
<comment type="tissue specificity">
    <text evidence="9">Expressed in the CNS and in the eye.</text>
</comment>
<comment type="developmental stage">
    <text evidence="10">Predominantly expressed in the developing CNS, the emerging dorsal root ganglia and cranial ganglia. In the CNS, expression is uniform along the rostrocaudal axis. During gastrulation, it is expressed within the anterior neural ectoderm. At 10 dpc, expression is strong in the ventricular zones (VZ) in all sectors of the brain, and lower in the marginal zones (MZ). Between 12 and 15 dpc, expression is prominent in the brain. It is strong in VZ, lower in MZ, except in telecephalic MZ where it is predominant. The intensity is higher in all VZ, and lower in differentiating fields than in VZ, except in the cerebral hemispheres, and to a lesser extent in the tectum and cerebellum. A weak expression is also observed in the fetal lungs, kidney and epithelia. In the newborn and postnatal stages, expression remains restricted to the VZ as well as in migrating and postmigratory cells throughout the brain.</text>
</comment>
<comment type="PTM">
    <text evidence="1">The iron and 2-oxoglutarate dependent 3-hydroxylation of aspartate and asparagine is (R) stereospecific within EGF domains.</text>
</comment>
<comment type="PTM">
    <text evidence="5">Autoproteolytically processed at the GPS region of the GAIN-B domain; this cleavage modulates receptor activity.</text>
</comment>
<comment type="similarity">
    <text evidence="12">Belongs to the G-protein coupled receptor 2 family. LN-TM7 subfamily.</text>
</comment>
<name>CELR2_MOUSE</name>
<accession>Q9R0M0</accession>
<accession>A2AEE7</accession>
<accession>Q99K26</accession>
<accession>Q9Z2R4</accession>
<keyword id="KW-0025">Alternative splicing</keyword>
<keyword id="KW-0106">Calcium</keyword>
<keyword id="KW-1003">Cell membrane</keyword>
<keyword id="KW-0217">Developmental protein</keyword>
<keyword id="KW-0903">Direct protein sequencing</keyword>
<keyword id="KW-1015">Disulfide bond</keyword>
<keyword id="KW-0245">EGF-like domain</keyword>
<keyword id="KW-0297">G-protein coupled receptor</keyword>
<keyword id="KW-0325">Glycoprotein</keyword>
<keyword id="KW-0379">Hydroxylation</keyword>
<keyword id="KW-0424">Laminin EGF-like domain</keyword>
<keyword id="KW-0472">Membrane</keyword>
<keyword id="KW-0675">Receptor</keyword>
<keyword id="KW-1185">Reference proteome</keyword>
<keyword id="KW-0677">Repeat</keyword>
<keyword id="KW-0732">Signal</keyword>
<keyword id="KW-0807">Transducer</keyword>
<keyword id="KW-0812">Transmembrane</keyword>
<keyword id="KW-1133">Transmembrane helix</keyword>
<reference key="1">
    <citation type="journal article" date="1999" name="Cell">
        <title>Flamingo, a seven-pass transmembrane cadherin, regulates planar cell polarity under the control of frizzled.</title>
        <authorList>
            <person name="Usui T."/>
            <person name="Shima Y."/>
            <person name="Shimada Y."/>
            <person name="Hirano S."/>
            <person name="Burgess R.W."/>
            <person name="Schwarz T.L."/>
            <person name="Takeichi M."/>
            <person name="Uemura T."/>
        </authorList>
    </citation>
    <scope>NUCLEOTIDE SEQUENCE [MRNA] (ISOFORM 1)</scope>
</reference>
<reference key="2">
    <citation type="journal article" date="2009" name="PLoS Biol.">
        <title>Lineage-specific biology revealed by a finished genome assembly of the mouse.</title>
        <authorList>
            <person name="Church D.M."/>
            <person name="Goodstadt L."/>
            <person name="Hillier L.W."/>
            <person name="Zody M.C."/>
            <person name="Goldstein S."/>
            <person name="She X."/>
            <person name="Bult C.J."/>
            <person name="Agarwala R."/>
            <person name="Cherry J.L."/>
            <person name="DiCuccio M."/>
            <person name="Hlavina W."/>
            <person name="Kapustin Y."/>
            <person name="Meric P."/>
            <person name="Maglott D."/>
            <person name="Birtle Z."/>
            <person name="Marques A.C."/>
            <person name="Graves T."/>
            <person name="Zhou S."/>
            <person name="Teague B."/>
            <person name="Potamousis K."/>
            <person name="Churas C."/>
            <person name="Place M."/>
            <person name="Herschleb J."/>
            <person name="Runnheim R."/>
            <person name="Forrest D."/>
            <person name="Amos-Landgraf J."/>
            <person name="Schwartz D.C."/>
            <person name="Cheng Z."/>
            <person name="Lindblad-Toh K."/>
            <person name="Eichler E.E."/>
            <person name="Ponting C.P."/>
        </authorList>
    </citation>
    <scope>NUCLEOTIDE SEQUENCE [LARGE SCALE GENOMIC DNA]</scope>
    <source>
        <strain>C57BL/6J</strain>
    </source>
</reference>
<reference key="3">
    <citation type="submission" date="2005-07" db="EMBL/GenBank/DDBJ databases">
        <authorList>
            <person name="Mural R.J."/>
            <person name="Adams M.D."/>
            <person name="Myers E.W."/>
            <person name="Smith H.O."/>
            <person name="Venter J.C."/>
        </authorList>
    </citation>
    <scope>NUCLEOTIDE SEQUENCE [LARGE SCALE GENOMIC DNA]</scope>
</reference>
<reference key="4">
    <citation type="submission" date="2007-04" db="UniProtKB">
        <authorList>
            <person name="Lubec G."/>
            <person name="Kang S.U."/>
        </authorList>
    </citation>
    <scope>PROTEIN SEQUENCE OF 158-170 AND 205-215</scope>
    <scope>IDENTIFICATION BY MASS SPECTROMETRY</scope>
    <source>
        <strain>C57BL/6J</strain>
        <tissue>Brain</tissue>
    </source>
</reference>
<reference key="5">
    <citation type="journal article" date="2000" name="Mamm. Genome">
        <title>Chromosomal localization of Celsr2 and Celsr3 in the mouse; Celsr3 is a candidate for the tippy (tip) lethal mutant on chromosome 9.</title>
        <authorList>
            <person name="Formstone C.J."/>
            <person name="Barclay J."/>
            <person name="Rees M."/>
            <person name="Little P.F.R."/>
        </authorList>
    </citation>
    <scope>NUCLEOTIDE SEQUENCE [MRNA] OF 1912-2795</scope>
    <scope>TISSUE SPECIFICITY</scope>
</reference>
<reference key="6">
    <citation type="journal article" date="2004" name="Genome Res.">
        <title>The status, quality, and expansion of the NIH full-length cDNA project: the Mammalian Gene Collection (MGC).</title>
        <authorList>
            <consortium name="The MGC Project Team"/>
        </authorList>
    </citation>
    <scope>NUCLEOTIDE SEQUENCE [LARGE SCALE MRNA] OF 2013-2919 (ISOFORM 2)</scope>
    <source>
        <tissue>Mammary tumor</tissue>
    </source>
</reference>
<reference key="7">
    <citation type="journal article" date="2002" name="Mech. Dev.">
        <title>Developmental expression profiles of Celsr (Flamingo) genes in the mouse.</title>
        <authorList>
            <person name="Tissir F."/>
            <person name="De-Backer O."/>
            <person name="Goffinet A.M."/>
            <person name="Lambert de Rouvroit C.A."/>
        </authorList>
    </citation>
    <scope>DEVELOPMENTAL STAGE</scope>
</reference>
<reference key="8">
    <citation type="journal article" date="2010" name="Cell">
        <title>A tissue-specific atlas of mouse protein phosphorylation and expression.</title>
        <authorList>
            <person name="Huttlin E.L."/>
            <person name="Jedrychowski M.P."/>
            <person name="Elias J.E."/>
            <person name="Goswami T."/>
            <person name="Rad R."/>
            <person name="Beausoleil S.A."/>
            <person name="Villen J."/>
            <person name="Haas W."/>
            <person name="Sowa M.E."/>
            <person name="Gygi S.P."/>
        </authorList>
    </citation>
    <scope>IDENTIFICATION BY MASS SPECTROMETRY [LARGE SCALE ANALYSIS]</scope>
    <source>
        <tissue>Brain</tissue>
        <tissue>Kidney</tissue>
    </source>
</reference>
<proteinExistence type="evidence at protein level"/>
<gene>
    <name evidence="13" type="primary">Celsr2</name>
</gene>
<feature type="signal peptide" evidence="2">
    <location>
        <begin position="1"/>
        <end position="31"/>
    </location>
</feature>
<feature type="chain" id="PRO_0000012917" description="Cadherin EGF LAG seven-pass G-type receptor 2">
    <location>
        <begin position="32"/>
        <end position="2919"/>
    </location>
</feature>
<feature type="topological domain" description="Extracellular" evidence="2">
    <location>
        <begin position="32"/>
        <end position="2380"/>
    </location>
</feature>
<feature type="transmembrane region" description="Helical; Name=1" evidence="2">
    <location>
        <begin position="2381"/>
        <end position="2401"/>
    </location>
</feature>
<feature type="topological domain" description="Cytoplasmic" evidence="2">
    <location>
        <begin position="2402"/>
        <end position="2413"/>
    </location>
</feature>
<feature type="transmembrane region" description="Helical; Name=2" evidence="2">
    <location>
        <begin position="2414"/>
        <end position="2433"/>
    </location>
</feature>
<feature type="topological domain" description="Extracellular" evidence="2">
    <location>
        <begin position="2434"/>
        <end position="2438"/>
    </location>
</feature>
<feature type="transmembrane region" description="Helical; Name=3" evidence="2">
    <location>
        <begin position="2439"/>
        <end position="2459"/>
    </location>
</feature>
<feature type="topological domain" description="Cytoplasmic" evidence="2">
    <location>
        <begin position="2460"/>
        <end position="2480"/>
    </location>
</feature>
<feature type="transmembrane region" description="Helical; Name=4" evidence="2">
    <location>
        <begin position="2481"/>
        <end position="2501"/>
    </location>
</feature>
<feature type="topological domain" description="Extracellular" evidence="2">
    <location>
        <begin position="2502"/>
        <end position="2518"/>
    </location>
</feature>
<feature type="transmembrane region" description="Helical; Name=5" evidence="2">
    <location>
        <begin position="2519"/>
        <end position="2539"/>
    </location>
</feature>
<feature type="topological domain" description="Cytoplasmic" evidence="2">
    <location>
        <begin position="2540"/>
        <end position="2563"/>
    </location>
</feature>
<feature type="transmembrane region" description="Helical; Name=6" evidence="2">
    <location>
        <begin position="2564"/>
        <end position="2584"/>
    </location>
</feature>
<feature type="topological domain" description="Extracellular" evidence="2">
    <location>
        <begin position="2585"/>
        <end position="2591"/>
    </location>
</feature>
<feature type="transmembrane region" description="Helical; Name=7" evidence="2">
    <location>
        <begin position="2592"/>
        <end position="2612"/>
    </location>
</feature>
<feature type="topological domain" description="Cytoplasmic" evidence="2">
    <location>
        <begin position="2613"/>
        <end position="2919"/>
    </location>
</feature>
<feature type="domain" description="Cadherin 1" evidence="3">
    <location>
        <begin position="182"/>
        <end position="289"/>
    </location>
</feature>
<feature type="domain" description="Cadherin 2" evidence="3">
    <location>
        <begin position="290"/>
        <end position="399"/>
    </location>
</feature>
<feature type="domain" description="Cadherin 3" evidence="3">
    <location>
        <begin position="400"/>
        <end position="505"/>
    </location>
</feature>
<feature type="domain" description="Cadherin 4" evidence="3">
    <location>
        <begin position="506"/>
        <end position="610"/>
    </location>
</feature>
<feature type="domain" description="Cadherin 5" evidence="3">
    <location>
        <begin position="611"/>
        <end position="712"/>
    </location>
</feature>
<feature type="domain" description="Cadherin 6" evidence="3">
    <location>
        <begin position="713"/>
        <end position="815"/>
    </location>
</feature>
<feature type="domain" description="Cadherin 7" evidence="3">
    <location>
        <begin position="816"/>
        <end position="921"/>
    </location>
</feature>
<feature type="domain" description="Cadherin 8" evidence="3">
    <location>
        <begin position="922"/>
        <end position="1023"/>
    </location>
</feature>
<feature type="domain" description="Cadherin 9" evidence="3">
    <location>
        <begin position="1028"/>
        <end position="1146"/>
    </location>
</feature>
<feature type="domain" description="EGF-like 1; atypical" evidence="4">
    <location>
        <begin position="1228"/>
        <end position="1286"/>
    </location>
</feature>
<feature type="domain" description="EGF-like 2; calcium-binding" evidence="4">
    <location>
        <begin position="1288"/>
        <end position="1318"/>
    </location>
</feature>
<feature type="domain" description="EGF-like 3; calcium-binding" evidence="4">
    <location>
        <begin position="1328"/>
        <end position="1366"/>
    </location>
</feature>
<feature type="domain" description="Laminin G-like 1" evidence="6">
    <location>
        <begin position="1367"/>
        <end position="1571"/>
    </location>
</feature>
<feature type="domain" description="EGF-like 4; calcium-binding" evidence="4">
    <location>
        <begin position="1574"/>
        <end position="1610"/>
    </location>
</feature>
<feature type="domain" description="Laminin G-like 2" evidence="6">
    <location>
        <begin position="1614"/>
        <end position="1791"/>
    </location>
</feature>
<feature type="domain" description="EGF-like 5; calcium-binding" evidence="4">
    <location>
        <begin position="1787"/>
        <end position="1829"/>
    </location>
</feature>
<feature type="domain" description="EGF-like 6; calcium-binding" evidence="4">
    <location>
        <begin position="1830"/>
        <end position="1867"/>
    </location>
</feature>
<feature type="domain" description="EGF-like 7; calcium-binding" evidence="4">
    <location>
        <begin position="1883"/>
        <end position="1922"/>
    </location>
</feature>
<feature type="domain" description="Laminin EGF-like" evidence="7">
    <location>
        <begin position="1924"/>
        <end position="1971"/>
    </location>
</feature>
<feature type="domain" description="GAIN-B" evidence="5">
    <location>
        <begin position="2199"/>
        <end position="2369"/>
    </location>
</feature>
<feature type="region of interest" description="Disordered" evidence="8">
    <location>
        <begin position="156"/>
        <end position="194"/>
    </location>
</feature>
<feature type="region of interest" description="Disordered" evidence="8">
    <location>
        <begin position="2216"/>
        <end position="2241"/>
    </location>
</feature>
<feature type="region of interest" description="GPS" evidence="5">
    <location>
        <begin position="2319"/>
        <end position="2369"/>
    </location>
</feature>
<feature type="region of interest" description="Disordered" evidence="8">
    <location>
        <begin position="2690"/>
        <end position="2884"/>
    </location>
</feature>
<feature type="compositionally biased region" description="Polar residues" evidence="8">
    <location>
        <begin position="175"/>
        <end position="194"/>
    </location>
</feature>
<feature type="compositionally biased region" description="Acidic residues" evidence="8">
    <location>
        <begin position="2718"/>
        <end position="2730"/>
    </location>
</feature>
<feature type="compositionally biased region" description="Polar residues" evidence="8">
    <location>
        <begin position="2791"/>
        <end position="2800"/>
    </location>
</feature>
<feature type="compositionally biased region" description="Basic and acidic residues" evidence="8">
    <location>
        <begin position="2803"/>
        <end position="2815"/>
    </location>
</feature>
<feature type="compositionally biased region" description="Low complexity" evidence="8">
    <location>
        <begin position="2857"/>
        <end position="2868"/>
    </location>
</feature>
<feature type="site" description="Cleavage; by autolysis" evidence="5">
    <location>
        <begin position="2356"/>
        <end position="2357"/>
    </location>
</feature>
<feature type="modified residue" description="(3R)-3-hydroxyasparagine" evidence="2">
    <location>
        <position position="1591"/>
    </location>
</feature>
<feature type="glycosylation site" description="N-linked (GlcNAc...) asparagine" evidence="2">
    <location>
        <position position="486"/>
    </location>
</feature>
<feature type="glycosylation site" description="N-linked (GlcNAc...) asparagine" evidence="2">
    <location>
        <position position="557"/>
    </location>
</feature>
<feature type="glycosylation site" description="N-linked (GlcNAc...) asparagine" evidence="2">
    <location>
        <position position="701"/>
    </location>
</feature>
<feature type="glycosylation site" description="N-linked (GlcNAc...) asparagine" evidence="2">
    <location>
        <position position="1036"/>
    </location>
</feature>
<feature type="glycosylation site" description="N-linked (GlcNAc...) asparagine" evidence="2">
    <location>
        <position position="1076"/>
    </location>
</feature>
<feature type="glycosylation site" description="N-linked (GlcNAc...) asparagine" evidence="2">
    <location>
        <position position="1182"/>
    </location>
</feature>
<feature type="glycosylation site" description="N-linked (GlcNAc...) asparagine" evidence="2">
    <location>
        <position position="1212"/>
    </location>
</feature>
<feature type="glycosylation site" description="N-linked (GlcNAc...) asparagine" evidence="2">
    <location>
        <position position="1501"/>
    </location>
</feature>
<feature type="glycosylation site" description="N-linked (GlcNAc...) asparagine" evidence="2">
    <location>
        <position position="1565"/>
    </location>
</feature>
<feature type="glycosylation site" description="N-linked (GlcNAc...) asparagine" evidence="2">
    <location>
        <position position="1741"/>
    </location>
</feature>
<feature type="glycosylation site" description="N-linked (GlcNAc...) asparagine" evidence="2">
    <location>
        <position position="1827"/>
    </location>
</feature>
<feature type="glycosylation site" description="N-linked (GlcNAc...) asparagine" evidence="2">
    <location>
        <position position="1900"/>
    </location>
</feature>
<feature type="glycosylation site" description="N-linked (GlcNAc...) asparagine" evidence="2">
    <location>
        <position position="2024"/>
    </location>
</feature>
<feature type="glycosylation site" description="N-linked (GlcNAc...) asparagine" evidence="2">
    <location>
        <position position="2043"/>
    </location>
</feature>
<feature type="glycosylation site" description="N-linked (GlcNAc...) asparagine" evidence="2">
    <location>
        <position position="2061"/>
    </location>
</feature>
<feature type="glycosylation site" description="N-linked (GlcNAc...) asparagine" evidence="2">
    <location>
        <position position="2323"/>
    </location>
</feature>
<feature type="glycosylation site" description="N-linked (GlcNAc...) asparagine" evidence="2">
    <location>
        <position position="2345"/>
    </location>
</feature>
<feature type="disulfide bond" evidence="1">
    <location>
        <begin position="1292"/>
        <end position="1303"/>
    </location>
</feature>
<feature type="disulfide bond" evidence="1">
    <location>
        <begin position="1297"/>
        <end position="1312"/>
    </location>
</feature>
<feature type="disulfide bond" evidence="1">
    <location>
        <begin position="1314"/>
        <end position="1323"/>
    </location>
</feature>
<feature type="disulfide bond" evidence="1">
    <location>
        <begin position="1332"/>
        <end position="1343"/>
    </location>
</feature>
<feature type="disulfide bond" evidence="1">
    <location>
        <begin position="1337"/>
        <end position="1353"/>
    </location>
</feature>
<feature type="disulfide bond" evidence="1">
    <location>
        <begin position="1355"/>
        <end position="1365"/>
    </location>
</feature>
<feature type="disulfide bond" evidence="1">
    <location>
        <begin position="1545"/>
        <end position="1571"/>
    </location>
</feature>
<feature type="disulfide bond" evidence="1">
    <location>
        <begin position="1578"/>
        <end position="1589"/>
    </location>
</feature>
<feature type="disulfide bond" evidence="1">
    <location>
        <begin position="1583"/>
        <end position="1598"/>
    </location>
</feature>
<feature type="disulfide bond" evidence="1">
    <location>
        <begin position="1600"/>
        <end position="1609"/>
    </location>
</feature>
<feature type="disulfide bond" evidence="1">
    <location>
        <begin position="1791"/>
        <end position="1802"/>
    </location>
</feature>
<feature type="disulfide bond" evidence="1">
    <location>
        <begin position="1797"/>
        <end position="1817"/>
    </location>
</feature>
<feature type="disulfide bond" evidence="1">
    <location>
        <begin position="1819"/>
        <end position="1828"/>
    </location>
</feature>
<feature type="disulfide bond" evidence="1">
    <location>
        <begin position="1832"/>
        <end position="1843"/>
    </location>
</feature>
<feature type="disulfide bond" evidence="1">
    <location>
        <begin position="1837"/>
        <end position="1855"/>
    </location>
</feature>
<feature type="disulfide bond" evidence="1">
    <location>
        <begin position="1857"/>
        <end position="1866"/>
    </location>
</feature>
<feature type="disulfide bond" evidence="1">
    <location>
        <begin position="1887"/>
        <end position="1899"/>
    </location>
</feature>
<feature type="disulfide bond" evidence="1">
    <location>
        <begin position="1889"/>
        <end position="1906"/>
    </location>
</feature>
<feature type="disulfide bond" evidence="1">
    <location>
        <begin position="1908"/>
        <end position="1921"/>
    </location>
</feature>
<feature type="disulfide bond" evidence="1">
    <location>
        <begin position="1924"/>
        <end position="1936"/>
    </location>
</feature>
<feature type="disulfide bond" evidence="1">
    <location>
        <begin position="1926"/>
        <end position="1943"/>
    </location>
</feature>
<feature type="disulfide bond" evidence="1">
    <location>
        <begin position="1945"/>
        <end position="1954"/>
    </location>
</feature>
<feature type="disulfide bond" evidence="1">
    <location>
        <begin position="1957"/>
        <end position="1969"/>
    </location>
</feature>
<feature type="disulfide bond" evidence="5">
    <location>
        <begin position="2319"/>
        <end position="2351"/>
    </location>
</feature>
<feature type="disulfide bond" evidence="5">
    <location>
        <begin position="2339"/>
        <end position="2353"/>
    </location>
</feature>
<feature type="splice variant" id="VSP_025765" description="In isoform 2." evidence="11">
    <location>
        <begin position="2912"/>
        <end position="2919"/>
    </location>
</feature>
<feature type="sequence conflict" description="In Ref. 1; BAA84070." evidence="12" ref="1">
    <original>S</original>
    <variation>T</variation>
    <location>
        <position position="3"/>
    </location>
</feature>
<feature type="sequence conflict" description="In Ref. 1; BAA84070." evidence="12" ref="1">
    <original>G</original>
    <variation>D</variation>
    <location>
        <position position="334"/>
    </location>
</feature>
<feature type="sequence conflict" description="In Ref. 1; BAA84070." evidence="12" ref="1">
    <original>D</original>
    <variation>H</variation>
    <location>
        <position position="638"/>
    </location>
</feature>
<feature type="sequence conflict" description="In Ref. 1; BAA84070." evidence="12" ref="1">
    <original>V</original>
    <variation>G</variation>
    <location>
        <position position="721"/>
    </location>
</feature>
<feature type="sequence conflict" description="In Ref. 1; BAA84070." evidence="12" ref="1">
    <original>A</original>
    <variation>G</variation>
    <location>
        <position position="762"/>
    </location>
</feature>
<feature type="sequence conflict" description="In Ref. 1; BAA84070." evidence="12" ref="1">
    <original>S</original>
    <variation>T</variation>
    <location>
        <position position="823"/>
    </location>
</feature>
<feature type="sequence conflict" description="In Ref. 1; BAA84070." evidence="12" ref="1">
    <original>S</original>
    <variation>L</variation>
    <location>
        <position position="838"/>
    </location>
</feature>
<feature type="sequence conflict" description="In Ref. 1; BAA84070." evidence="12" ref="1">
    <original>V</original>
    <variation>G</variation>
    <location>
        <position position="914"/>
    </location>
</feature>
<feature type="sequence conflict" description="In Ref. 1; BAA84070." evidence="12" ref="1">
    <original>Q</original>
    <variation>K</variation>
    <location>
        <position position="1222"/>
    </location>
</feature>
<feature type="sequence conflict" description="In Ref. 1; BAA84070." evidence="12" ref="1">
    <original>P</original>
    <variation>L</variation>
    <location>
        <position position="1268"/>
    </location>
</feature>
<feature type="sequence conflict" description="In Ref. 1; BAA84070." evidence="12" ref="1">
    <original>F</original>
    <variation>L</variation>
    <location>
        <position position="1280"/>
    </location>
</feature>
<feature type="sequence conflict" description="In Ref. 1; BAA84070." evidence="12" ref="1">
    <original>P</original>
    <variation>T</variation>
    <location>
        <position position="1296"/>
    </location>
</feature>
<feature type="sequence conflict" description="In Ref. 1; BAA84070." evidence="12" ref="1">
    <original>LDG</original>
    <variation>RGC</variation>
    <location>
        <begin position="1315"/>
        <end position="1317"/>
    </location>
</feature>
<feature type="sequence conflict" description="In Ref. 1; BAA84070." evidence="12" ref="1">
    <original>F</original>
    <variation>I</variation>
    <location>
        <position position="1351"/>
    </location>
</feature>
<feature type="sequence conflict" description="In Ref. 1; BAA84070." evidence="12" ref="1">
    <original>D</original>
    <variation>H</variation>
    <location>
        <position position="1359"/>
    </location>
</feature>
<feature type="sequence conflict" description="In Ref. 1; BAA84070." evidence="12" ref="1">
    <original>S</original>
    <variation>P</variation>
    <location>
        <position position="1376"/>
    </location>
</feature>
<feature type="sequence conflict" description="In Ref. 1; BAA84070." evidence="12" ref="1">
    <original>R</original>
    <variation>H</variation>
    <location>
        <position position="1384"/>
    </location>
</feature>
<feature type="sequence conflict" description="In Ref. 1; BAA84070." evidence="12" ref="1">
    <original>A</original>
    <variation>T</variation>
    <location>
        <position position="1595"/>
    </location>
</feature>
<feature type="sequence conflict" description="In Ref. 1; BAA84070." evidence="12" ref="1">
    <original>S</original>
    <variation>Y</variation>
    <location>
        <position position="1631"/>
    </location>
</feature>
<feature type="sequence conflict" description="In Ref. 1; BAA84070." evidence="12" ref="1">
    <original>S</original>
    <variation>N</variation>
    <location>
        <position position="1641"/>
    </location>
</feature>
<feature type="sequence conflict" description="In Ref. 1; BAA84070." evidence="12" ref="1">
    <original>VLSV</original>
    <variation>RLSM</variation>
    <location>
        <begin position="1674"/>
        <end position="1677"/>
    </location>
</feature>
<feature type="sequence conflict" description="In Ref. 1; BAA84070." evidence="12" ref="1">
    <original>R</original>
    <variation>H</variation>
    <location>
        <position position="1688"/>
    </location>
</feature>
<feature type="sequence conflict" description="In Ref. 1; BAA84070." evidence="12" ref="1">
    <original>G</original>
    <variation>R</variation>
    <location>
        <position position="1710"/>
    </location>
</feature>
<feature type="sequence conflict" description="In Ref. 1; BAA84070." evidence="12" ref="1">
    <original>D</original>
    <variation>N</variation>
    <location>
        <position position="1720"/>
    </location>
</feature>
<feature type="sequence conflict" description="In Ref. 1; BAA84070." evidence="12" ref="1">
    <original>K</original>
    <variation>T</variation>
    <location>
        <position position="1725"/>
    </location>
</feature>
<feature type="sequence conflict" description="In Ref. 1; BAA84070." evidence="12" ref="1">
    <original>IS</original>
    <variation>VH</variation>
    <location>
        <begin position="1774"/>
        <end position="1775"/>
    </location>
</feature>
<feature type="sequence conflict" description="In Ref. 1; BAA84070." evidence="12" ref="1">
    <original>W</original>
    <variation>L</variation>
    <location>
        <position position="1793"/>
    </location>
</feature>
<feature type="sequence conflict" description="In Ref. 1; BAA84070." evidence="12" ref="1">
    <original>C</original>
    <variation>Y</variation>
    <location>
        <position position="1808"/>
    </location>
</feature>
<feature type="sequence conflict" description="In Ref. 1; BAA84070." evidence="12" ref="1">
    <original>D</original>
    <variation>N</variation>
    <location>
        <position position="1813"/>
    </location>
</feature>
<feature type="sequence conflict" description="In Ref. 1; BAA84070." evidence="12" ref="1">
    <original>N</original>
    <variation>K</variation>
    <location>
        <position position="1911"/>
    </location>
</feature>
<feature type="sequence conflict" description="In Ref. 5; AAC68837 and 1; BAA84070." evidence="12" ref="5 1">
    <original>L</original>
    <variation>V</variation>
    <location>
        <position position="2198"/>
    </location>
</feature>
<feature type="sequence conflict" description="In Ref. 5; AAC68837 and 1; BAA84070." evidence="12" ref="5 1">
    <original>V</original>
    <variation>A</variation>
    <location>
        <position position="2282"/>
    </location>
</feature>
<feature type="sequence conflict" description="In Ref. 1; BAA84070." evidence="12" ref="1">
    <original>S</original>
    <variation>R</variation>
    <location>
        <position position="2534"/>
    </location>
</feature>
<feature type="sequence conflict" description="In Ref. 5; AAC68837." evidence="12" ref="5">
    <original>L</original>
    <variation>R</variation>
    <location>
        <position position="2570"/>
    </location>
</feature>
<feature type="sequence conflict" description="In Ref. 5; AAC68837 and 1; BAA84070." evidence="12" ref="5 1">
    <original>S</original>
    <variation>Y</variation>
    <location>
        <position position="2638"/>
    </location>
</feature>
<feature type="sequence conflict" description="In Ref. 1; BAA84070." evidence="12" ref="1">
    <original>L</original>
    <variation>C</variation>
    <location>
        <position position="2760"/>
    </location>
</feature>
<feature type="sequence conflict" description="In Ref. 5; AAC68837." evidence="12" ref="5">
    <original>K</original>
    <variation>R</variation>
    <location>
        <position position="2795"/>
    </location>
</feature>
<feature type="sequence conflict" description="In Ref. 1; BAA84070." evidence="12" ref="1">
    <original>P</original>
    <variation>A</variation>
    <location>
        <position position="2802"/>
    </location>
</feature>
<feature type="sequence conflict" description="In Ref. 1; BAA84070." evidence="12" ref="1">
    <original>K</original>
    <variation>N</variation>
    <location>
        <position position="2899"/>
    </location>
</feature>
<sequence length="2919" mass="316986">MRSRAASAPLPTPLLPLLLLLLLLPPSPLLGDQVGPCRSLGSGGRSSSGACAPVGWLCPASASNLWLYTSRCRESGIELTGHLVPHHDGLRVWCPESGAHIPLPPSSEGCPWSCRLLGIGGHLSPQGTLTLPEEHPCLKAPRLRCQSCKLAQAPGLRAGEGSPEESLGGRRKRNVNTAPQFQPPSYQATVPENQPAGTSVASLRAIDPDEGEAGRLEYTMDALFDSRSNHFFSLDPITGVVTTAEELDRETKSTHVFRVTAQDHGMPRRSALATLTILVTDTNDHDPVFEQQEYKESLRENLEVGYEVLTVRATDGDAPPNANILYRLLEGAGGSPSDAFEIDPRSGVIRTRGPVDREEVESYKLTVEASDQGRDPGPRSSTAIVFLSVEDDNDNAPQFSEKRYVVQVREDVTPGAPVLRVTASDRDKGSNALVHYSIMSGNARGQFYLDAQTGALDVVSPLDYETTKEYTLRIRAQDGGRPPLSNVSGLVTVQVLDINDNAPIFVSTPFQATVLESVPLGYLVLHVQAIDADAGDNARLEYSLAGVGHDFPFTINNGTGWISVAAELDREEVDFYSFGVEARDHGTPALTASASVSVTILDVNDNNPTFTQPEYTVRLNEDAAVGTSVVTVSAVDRDAHSVITYQITSGNTRNRFSITSQSGGGLVSLALPLDYKLERQYVLAVTASDGTRQDTAQIVVNVTDANTHRPVFQSSHYTVNVNEDRPAGTTVVLISATDEDTGENARITYFMEDSIPQFRIDADTGAVTTQAELDYEDQVSYTLAITARDNGIPQKSDTTYLEILVNDVNDNAPQFLRDSYQGSVYEDVPPFTSVLQISATDRDSGLNGRVFYTFQGGDDGDGDFIVESTSGIVRTLRRLDRENVAQYVLRAYAVDKGMPPARTPMEVTVTVLDVNDNPPVFEQDEFDVFVEENSPIGLAVARVTATDPDEGTNAQIMYQIVEGNIPEVFQLDIFSGELTALVDLDYEDRPEYVLVIQATSAPLVSRATVHVRLLDRNDNPPVLGNFEILFNNYVTNRSSSFPGGAIGRVPAHDPDISDSLTYSFERGNELSLVLLNASTGELRLSRALDNNRPLEAIMSVLVSDGVHSVTAQCSLRVTIITDEMLTHSITLRLEDMSPERFLSPLLGLFIQAVAATLATPPDHVVVFNVQRDTDAPGGHILNVSLSVGQPPGPGGGPPFLPSEDLQERLYLNRSLLTAISAQRVLPFDDNICLREPCENYMRCVSVLRFDSSAPFIASSSVLFRPIHPVGGLRCRCPPGFTGDYCETEVDLCYSRPCGPHGRCRSREGGYTCLCLDGYTGEHCEASTHSGRCTPGVCKNGGTCVNLLVGGFKCDCPSGDFEKPFCQVTTRSFPARSFITFRGLRQRFHFTLALSFATKERNGLLLYNGRFNEKHDFVALEVIQEQVQLTFSAGESTTTVSPFVPGGVSDGQWHTVQLKYYNKPLLGQTGLPQGPSEQKVAVVSVDGCDTGVALRFGAMLGNYSCAAQGTQGGSKKSLDLTGPLLLGGVPDLPESFPVRMRHFVGCMKDLQVDSRHIDMADFIANNGTVPGCPTKKIVCDSSICHNGGTCVNQWNAFSCECPLGFGGKSCAQEMANPQRFLGSSLVAWHGLSLPISQPWHLSLMFRTRQADGVLLQAVTRGRSTITLQLRAGHVVLSVEGTGLQASSLRLEPGRANDGDWHHAQLALGASGGPGHAILSFDYGQQKAEGNLGPRLHGLHLSNITVGGVPGPASGVARGFRGCLQGVRVSETPEGISSLDPSRGESINVEPGCSWPDPCDSNPCPTNSYCSNDWDSYSCSCVLGYYGDNCTNVCDLNPCEHQSVCTRKPNTPHGYICECLPNYLGPYCETRIDQPCPRGWWGHPTCGPCNCDVSKGFDPDCNKTSGECHCKENHYRPPGSPTCLLCDCYPTGSLSRVCDPEDGQCPCKPGVIGRQCDRCDNPFAEVTTNGCEVNYDSCPRAIEAGIWWPRTRFGLPAAAPCPKGSFGTAVRHCDEHRGWLPPNLFNCTSVTFSELKGFAERLQRNESGLDSGRSQRLALLLRNATQHTSGYFGSDVKVAYQLATRLLAHESAQRGFGLSATQDVHFTENLLRVGSALLDAANKRHWELIQQTEGGTAWLLQHYEAYASALAQNMRHTYLSPFTIVTPNIVISVVRLDKGNFAGTKLPRYEALRGERPPDLETTVILPESVFREMPSMVRSAGPGEAQETEELARRQRRHPELSQGEAVASVIIYHTLAGLLPHNYDPDKRSLRVPKRPVINTPVVSISVHDDEELLPRALDKPVTVQFRLLETEERTKPICVFWNHSILVSGTGGWSARGCEVVFRNESHVSCQCNHMTSFAVLMDMSRRENGEILPLKTLTYVALGVTLAALMLTFLFLTLLRALRSNQHGIRRNLTAALGLAQLVFLLGINQADLPFACTVIAILLHFLYLCTFSWALLEALHLYRALTEVRDVNASPMRFYYMLGWGVPAFITGLAVGLDPEGYGNPDFCWLSVYDTLIWSFAGPVAFAVSMSVFLYILSARASCAAQRQGFEKKGPVSGLRSSFTVLLLLSATWLLALLSVNSDTLLFHYLFAACNCVQGPFIFLSYVVLSKEVRKALKFACSRKPSPDPALTTKSTLTSSYNCPSPYADGRLYQPYGDSAGSLHSASRSGKSQPSYIPFLLREESTLNPGQVPPGLGDPSGLFLEGQAQQHDPDTDSDSDLSLEDDQSGSYASTHSSDSEEEEEEAAFPGEQGWDSLLGPGAERLPLHSTPKDGGPGSGKVPWLGDFGTTTKENSGSGPLEERPRENGDALTREGSLGPLPGPSTQPHKGILKKKCLPTISEKSSLLRLPLEQGTGSSRGSSISEGSRHGPPPRPPPRQSLQEQLNGVMPVAMSIKAGTVDEDSSGSEFLFFNFLH</sequence>
<evidence type="ECO:0000250" key="1"/>
<evidence type="ECO:0000255" key="2"/>
<evidence type="ECO:0000255" key="3">
    <source>
        <dbReference type="PROSITE-ProRule" id="PRU00043"/>
    </source>
</evidence>
<evidence type="ECO:0000255" key="4">
    <source>
        <dbReference type="PROSITE-ProRule" id="PRU00076"/>
    </source>
</evidence>
<evidence type="ECO:0000255" key="5">
    <source>
        <dbReference type="PROSITE-ProRule" id="PRU00098"/>
    </source>
</evidence>
<evidence type="ECO:0000255" key="6">
    <source>
        <dbReference type="PROSITE-ProRule" id="PRU00122"/>
    </source>
</evidence>
<evidence type="ECO:0000255" key="7">
    <source>
        <dbReference type="PROSITE-ProRule" id="PRU00460"/>
    </source>
</evidence>
<evidence type="ECO:0000256" key="8">
    <source>
        <dbReference type="SAM" id="MobiDB-lite"/>
    </source>
</evidence>
<evidence type="ECO:0000269" key="9">
    <source>
    </source>
</evidence>
<evidence type="ECO:0000269" key="10">
    <source>
    </source>
</evidence>
<evidence type="ECO:0000303" key="11">
    <source>
    </source>
</evidence>
<evidence type="ECO:0000305" key="12"/>
<evidence type="ECO:0000312" key="13">
    <source>
        <dbReference type="MGI" id="MGI:1858235"/>
    </source>
</evidence>